<feature type="chain" id="PRO_0000443724" description="Chloroplastic import inner membrane translocase subunit HP30-1">
    <location>
        <begin position="1"/>
        <end position="261"/>
    </location>
</feature>
<feature type="transmembrane region" description="Helical" evidence="1">
    <location>
        <begin position="59"/>
        <end position="77"/>
    </location>
</feature>
<feature type="transmembrane region" description="Helical" evidence="1">
    <location>
        <begin position="113"/>
        <end position="129"/>
    </location>
</feature>
<feature type="transmembrane region" description="Helical" evidence="1">
    <location>
        <begin position="139"/>
        <end position="155"/>
    </location>
</feature>
<feature type="transmembrane region" description="Helical" evidence="1">
    <location>
        <begin position="163"/>
        <end position="180"/>
    </location>
</feature>
<feature type="helix" evidence="8">
    <location>
        <begin position="194"/>
        <end position="196"/>
    </location>
</feature>
<feature type="helix" evidence="8">
    <location>
        <begin position="197"/>
        <end position="206"/>
    </location>
</feature>
<feature type="helix" evidence="8">
    <location>
        <begin position="209"/>
        <end position="211"/>
    </location>
</feature>
<feature type="helix" evidence="8">
    <location>
        <begin position="212"/>
        <end position="217"/>
    </location>
</feature>
<feature type="helix" evidence="8">
    <location>
        <begin position="222"/>
        <end position="227"/>
    </location>
</feature>
<feature type="helix" evidence="8">
    <location>
        <begin position="230"/>
        <end position="235"/>
    </location>
</feature>
<feature type="helix" evidence="8">
    <location>
        <begin position="240"/>
        <end position="252"/>
    </location>
</feature>
<proteinExistence type="evidence at protein level"/>
<accession>Q9SCK3</accession>
<sequence length="261" mass="27982">MVVGGGGEGDQKRSSGEMMAMASLFNDQQNPIQQFQVKFKEVETNFKTWLSKQSIPVEAAVVSTMSGVQGAFIGGLMGTLSPEMPQAGVDPQAIASMKQAQALVGGPWVQARNFAAITGVNAGIASVMKRIRGKEDIESAVVAALGSGFAYSLVSQGLQGQPMNAITTAAGFAVFQGVFFKLGERFSKPSTEDPFFTRGRTMLVKLGLEKYEKNFKKGLLTDPTLPLLTDSALKDANIPPGPRLMILDHIQRDPEIKGKRK</sequence>
<name>HP301_ARATH</name>
<reference key="1">
    <citation type="journal article" date="2007" name="Plant Physiol.">
        <title>Characterization of the preprotein and amino acid transporter gene family in Arabidopsis.</title>
        <authorList>
            <person name="Murcha M.W."/>
            <person name="Elhafez D."/>
            <person name="Lister R."/>
            <person name="Tonti-Filippini J."/>
            <person name="Baumgartner M."/>
            <person name="Philippar K."/>
            <person name="Carrie C."/>
            <person name="Mokranjac D."/>
            <person name="Soll J."/>
            <person name="Whelan J."/>
        </authorList>
    </citation>
    <scope>NUCLEOTIDE SEQUENCE [MRNA]</scope>
    <scope>SUBCELLULAR LOCATION</scope>
    <scope>GENE FAMILY</scope>
</reference>
<reference key="2">
    <citation type="journal article" date="2000" name="Nature">
        <title>Sequence and analysis of chromosome 3 of the plant Arabidopsis thaliana.</title>
        <authorList>
            <person name="Salanoubat M."/>
            <person name="Lemcke K."/>
            <person name="Rieger M."/>
            <person name="Ansorge W."/>
            <person name="Unseld M."/>
            <person name="Fartmann B."/>
            <person name="Valle G."/>
            <person name="Bloecker H."/>
            <person name="Perez-Alonso M."/>
            <person name="Obermaier B."/>
            <person name="Delseny M."/>
            <person name="Boutry M."/>
            <person name="Grivell L.A."/>
            <person name="Mache R."/>
            <person name="Puigdomenech P."/>
            <person name="De Simone V."/>
            <person name="Choisne N."/>
            <person name="Artiguenave F."/>
            <person name="Robert C."/>
            <person name="Brottier P."/>
            <person name="Wincker P."/>
            <person name="Cattolico L."/>
            <person name="Weissenbach J."/>
            <person name="Saurin W."/>
            <person name="Quetier F."/>
            <person name="Schaefer M."/>
            <person name="Mueller-Auer S."/>
            <person name="Gabel C."/>
            <person name="Fuchs M."/>
            <person name="Benes V."/>
            <person name="Wurmbach E."/>
            <person name="Drzonek H."/>
            <person name="Erfle H."/>
            <person name="Jordan N."/>
            <person name="Bangert S."/>
            <person name="Wiedelmann R."/>
            <person name="Kranz H."/>
            <person name="Voss H."/>
            <person name="Holland R."/>
            <person name="Brandt P."/>
            <person name="Nyakatura G."/>
            <person name="Vezzi A."/>
            <person name="D'Angelo M."/>
            <person name="Pallavicini A."/>
            <person name="Toppo S."/>
            <person name="Simionati B."/>
            <person name="Conrad A."/>
            <person name="Hornischer K."/>
            <person name="Kauer G."/>
            <person name="Loehnert T.-H."/>
            <person name="Nordsiek G."/>
            <person name="Reichelt J."/>
            <person name="Scharfe M."/>
            <person name="Schoen O."/>
            <person name="Bargues M."/>
            <person name="Terol J."/>
            <person name="Climent J."/>
            <person name="Navarro P."/>
            <person name="Collado C."/>
            <person name="Perez-Perez A."/>
            <person name="Ottenwaelder B."/>
            <person name="Duchemin D."/>
            <person name="Cooke R."/>
            <person name="Laudie M."/>
            <person name="Berger-Llauro C."/>
            <person name="Purnelle B."/>
            <person name="Masuy D."/>
            <person name="de Haan M."/>
            <person name="Maarse A.C."/>
            <person name="Alcaraz J.-P."/>
            <person name="Cottet A."/>
            <person name="Casacuberta E."/>
            <person name="Monfort A."/>
            <person name="Argiriou A."/>
            <person name="Flores M."/>
            <person name="Liguori R."/>
            <person name="Vitale D."/>
            <person name="Mannhaupt G."/>
            <person name="Haase D."/>
            <person name="Schoof H."/>
            <person name="Rudd S."/>
            <person name="Zaccaria P."/>
            <person name="Mewes H.-W."/>
            <person name="Mayer K.F.X."/>
            <person name="Kaul S."/>
            <person name="Town C.D."/>
            <person name="Koo H.L."/>
            <person name="Tallon L.J."/>
            <person name="Jenkins J."/>
            <person name="Rooney T."/>
            <person name="Rizzo M."/>
            <person name="Walts A."/>
            <person name="Utterback T."/>
            <person name="Fujii C.Y."/>
            <person name="Shea T.P."/>
            <person name="Creasy T.H."/>
            <person name="Haas B."/>
            <person name="Maiti R."/>
            <person name="Wu D."/>
            <person name="Peterson J."/>
            <person name="Van Aken S."/>
            <person name="Pai G."/>
            <person name="Militscher J."/>
            <person name="Sellers P."/>
            <person name="Gill J.E."/>
            <person name="Feldblyum T.V."/>
            <person name="Preuss D."/>
            <person name="Lin X."/>
            <person name="Nierman W.C."/>
            <person name="Salzberg S.L."/>
            <person name="White O."/>
            <person name="Venter J.C."/>
            <person name="Fraser C.M."/>
            <person name="Kaneko T."/>
            <person name="Nakamura Y."/>
            <person name="Sato S."/>
            <person name="Kato T."/>
            <person name="Asamizu E."/>
            <person name="Sasamoto S."/>
            <person name="Kimura T."/>
            <person name="Idesawa K."/>
            <person name="Kawashima K."/>
            <person name="Kishida Y."/>
            <person name="Kiyokawa C."/>
            <person name="Kohara M."/>
            <person name="Matsumoto M."/>
            <person name="Matsuno A."/>
            <person name="Muraki A."/>
            <person name="Nakayama S."/>
            <person name="Nakazaki N."/>
            <person name="Shinpo S."/>
            <person name="Takeuchi C."/>
            <person name="Wada T."/>
            <person name="Watanabe A."/>
            <person name="Yamada M."/>
            <person name="Yasuda M."/>
            <person name="Tabata S."/>
        </authorList>
    </citation>
    <scope>NUCLEOTIDE SEQUENCE [LARGE SCALE GENOMIC DNA]</scope>
    <source>
        <strain>cv. Columbia</strain>
    </source>
</reference>
<reference key="3">
    <citation type="journal article" date="2017" name="Plant J.">
        <title>Araport11: a complete reannotation of the Arabidopsis thaliana reference genome.</title>
        <authorList>
            <person name="Cheng C.Y."/>
            <person name="Krishnakumar V."/>
            <person name="Chan A.P."/>
            <person name="Thibaud-Nissen F."/>
            <person name="Schobel S."/>
            <person name="Town C.D."/>
        </authorList>
    </citation>
    <scope>GENOME REANNOTATION</scope>
    <source>
        <strain>cv. Columbia</strain>
    </source>
</reference>
<reference key="4">
    <citation type="journal article" date="2003" name="Science">
        <title>Empirical analysis of transcriptional activity in the Arabidopsis genome.</title>
        <authorList>
            <person name="Yamada K."/>
            <person name="Lim J."/>
            <person name="Dale J.M."/>
            <person name="Chen H."/>
            <person name="Shinn P."/>
            <person name="Palm C.J."/>
            <person name="Southwick A.M."/>
            <person name="Wu H.C."/>
            <person name="Kim C.J."/>
            <person name="Nguyen M."/>
            <person name="Pham P.K."/>
            <person name="Cheuk R.F."/>
            <person name="Karlin-Newmann G."/>
            <person name="Liu S.X."/>
            <person name="Lam B."/>
            <person name="Sakano H."/>
            <person name="Wu T."/>
            <person name="Yu G."/>
            <person name="Miranda M."/>
            <person name="Quach H.L."/>
            <person name="Tripp M."/>
            <person name="Chang C.H."/>
            <person name="Lee J.M."/>
            <person name="Toriumi M.J."/>
            <person name="Chan M.M."/>
            <person name="Tang C.C."/>
            <person name="Onodera C.S."/>
            <person name="Deng J.M."/>
            <person name="Akiyama K."/>
            <person name="Ansari Y."/>
            <person name="Arakawa T."/>
            <person name="Banh J."/>
            <person name="Banno F."/>
            <person name="Bowser L."/>
            <person name="Brooks S.Y."/>
            <person name="Carninci P."/>
            <person name="Chao Q."/>
            <person name="Choy N."/>
            <person name="Enju A."/>
            <person name="Goldsmith A.D."/>
            <person name="Gurjal M."/>
            <person name="Hansen N.F."/>
            <person name="Hayashizaki Y."/>
            <person name="Johnson-Hopson C."/>
            <person name="Hsuan V.W."/>
            <person name="Iida K."/>
            <person name="Karnes M."/>
            <person name="Khan S."/>
            <person name="Koesema E."/>
            <person name="Ishida J."/>
            <person name="Jiang P.X."/>
            <person name="Jones T."/>
            <person name="Kawai J."/>
            <person name="Kamiya A."/>
            <person name="Meyers C."/>
            <person name="Nakajima M."/>
            <person name="Narusaka M."/>
            <person name="Seki M."/>
            <person name="Sakurai T."/>
            <person name="Satou M."/>
            <person name="Tamse R."/>
            <person name="Vaysberg M."/>
            <person name="Wallender E.K."/>
            <person name="Wong C."/>
            <person name="Yamamura Y."/>
            <person name="Yuan S."/>
            <person name="Shinozaki K."/>
            <person name="Davis R.W."/>
            <person name="Theologis A."/>
            <person name="Ecker J.R."/>
        </authorList>
    </citation>
    <scope>NUCLEOTIDE SEQUENCE [LARGE SCALE MRNA]</scope>
    <source>
        <strain>cv. Columbia</strain>
    </source>
</reference>
<reference key="5">
    <citation type="submission" date="2002-03" db="EMBL/GenBank/DDBJ databases">
        <title>Full-length cDNA from Arabidopsis thaliana.</title>
        <authorList>
            <person name="Brover V.V."/>
            <person name="Troukhan M.E."/>
            <person name="Alexandrov N.A."/>
            <person name="Lu Y.-P."/>
            <person name="Flavell R.B."/>
            <person name="Feldmann K.A."/>
        </authorList>
    </citation>
    <scope>NUCLEOTIDE SEQUENCE [LARGE SCALE MRNA]</scope>
</reference>
<reference key="6">
    <citation type="journal article" date="2005" name="Mol. Cell. Proteomics">
        <title>Proteome analysis of the rice etioplast: metabolic and regulatory networks and novel protein functions.</title>
        <authorList>
            <person name="von Zychlinski A."/>
            <person name="Kleffmann T."/>
            <person name="Krishnamurthy N."/>
            <person name="Sjoelander K."/>
            <person name="Baginsky S."/>
            <person name="Gruissem W."/>
        </authorList>
    </citation>
    <scope>IDENTIFICATION</scope>
</reference>
<reference key="7">
    <citation type="journal article" date="2013" name="Proc. Natl. Acad. Sci. U.S.A.">
        <title>Three proteins mediate import of transit sequence-less precursors into the inner envelope of chloroplasts in Arabidopsis thaliana.</title>
        <authorList>
            <person name="Rossig C."/>
            <person name="Reinbothe C."/>
            <person name="Gray J."/>
            <person name="Valdes O."/>
            <person name="von Wettstein D."/>
            <person name="Reinbothe S."/>
        </authorList>
    </citation>
    <scope>FUNCTION</scope>
    <scope>DISRUPTION PHENOTYPE</scope>
    <scope>SUBCELLULAR LOCATION</scope>
    <scope>INTERACTION WITH CEQORH</scope>
    <source>
        <strain>cv. Columbia</strain>
    </source>
</reference>
<dbReference type="EMBL" id="DQ405266">
    <property type="protein sequence ID" value="ABD64055.1"/>
    <property type="molecule type" value="mRNA"/>
</dbReference>
<dbReference type="EMBL" id="AL132964">
    <property type="protein sequence ID" value="CAB62460.1"/>
    <property type="molecule type" value="Genomic_DNA"/>
</dbReference>
<dbReference type="EMBL" id="CP002686">
    <property type="protein sequence ID" value="AEE78557.1"/>
    <property type="molecule type" value="Genomic_DNA"/>
</dbReference>
<dbReference type="EMBL" id="AF360191">
    <property type="protein sequence ID" value="AAK25901.1"/>
    <property type="molecule type" value="mRNA"/>
</dbReference>
<dbReference type="EMBL" id="BT001951">
    <property type="protein sequence ID" value="AAN71950.1"/>
    <property type="molecule type" value="mRNA"/>
</dbReference>
<dbReference type="EMBL" id="AY085551">
    <property type="protein sequence ID" value="AAM62775.1"/>
    <property type="molecule type" value="mRNA"/>
</dbReference>
<dbReference type="PIR" id="T46233">
    <property type="entry name" value="T46233"/>
</dbReference>
<dbReference type="RefSeq" id="NP_190525.1">
    <property type="nucleotide sequence ID" value="NM_114816.4"/>
</dbReference>
<dbReference type="PDB" id="8UCY">
    <property type="method" value="X-ray"/>
    <property type="resolution" value="1.48 A"/>
    <property type="chains" value="A/B/C=190-261"/>
</dbReference>
<dbReference type="PDB" id="8UCZ">
    <property type="method" value="X-ray"/>
    <property type="resolution" value="2.07 A"/>
    <property type="chains" value="A/B/C=190-261"/>
</dbReference>
<dbReference type="PDB" id="8UD0">
    <property type="method" value="X-ray"/>
    <property type="resolution" value="1.89 A"/>
    <property type="chains" value="A/B=190-261"/>
</dbReference>
<dbReference type="PDBsum" id="8UCY"/>
<dbReference type="PDBsum" id="8UCZ"/>
<dbReference type="PDBsum" id="8UD0"/>
<dbReference type="SMR" id="Q9SCK3"/>
<dbReference type="FunCoup" id="Q9SCK3">
    <property type="interactions" value="1565"/>
</dbReference>
<dbReference type="STRING" id="3702.Q9SCK3"/>
<dbReference type="PaxDb" id="3702-AT3G49560.1"/>
<dbReference type="ProteomicsDB" id="232149"/>
<dbReference type="DNASU" id="824118"/>
<dbReference type="EnsemblPlants" id="AT3G49560.1">
    <property type="protein sequence ID" value="AT3G49560.1"/>
    <property type="gene ID" value="AT3G49560"/>
</dbReference>
<dbReference type="GeneID" id="824118"/>
<dbReference type="Gramene" id="AT3G49560.1">
    <property type="protein sequence ID" value="AT3G49560.1"/>
    <property type="gene ID" value="AT3G49560"/>
</dbReference>
<dbReference type="KEGG" id="ath:AT3G49560"/>
<dbReference type="Araport" id="AT3G49560"/>
<dbReference type="TAIR" id="AT3G49560">
    <property type="gene designation" value="HP30"/>
</dbReference>
<dbReference type="eggNOG" id="ENOG502QPIB">
    <property type="taxonomic scope" value="Eukaryota"/>
</dbReference>
<dbReference type="HOGENOM" id="CLU_072970_0_0_1"/>
<dbReference type="InParanoid" id="Q9SCK3"/>
<dbReference type="OMA" id="FFALMQG"/>
<dbReference type="OrthoDB" id="507126at2759"/>
<dbReference type="PhylomeDB" id="Q9SCK3"/>
<dbReference type="PRO" id="PR:Q9SCK3"/>
<dbReference type="Proteomes" id="UP000006548">
    <property type="component" value="Chromosome 3"/>
</dbReference>
<dbReference type="ExpressionAtlas" id="Q9SCK3">
    <property type="expression patterns" value="baseline and differential"/>
</dbReference>
<dbReference type="GO" id="GO:0009507">
    <property type="term" value="C:chloroplast"/>
    <property type="evidence" value="ECO:0000314"/>
    <property type="project" value="UniProtKB"/>
</dbReference>
<dbReference type="GO" id="GO:0009941">
    <property type="term" value="C:chloroplast envelope"/>
    <property type="evidence" value="ECO:0007005"/>
    <property type="project" value="TAIR"/>
</dbReference>
<dbReference type="GO" id="GO:0009706">
    <property type="term" value="C:chloroplast inner membrane"/>
    <property type="evidence" value="ECO:0000314"/>
    <property type="project" value="UniProtKB"/>
</dbReference>
<dbReference type="GO" id="GO:0005829">
    <property type="term" value="C:cytosol"/>
    <property type="evidence" value="ECO:0007005"/>
    <property type="project" value="TAIR"/>
</dbReference>
<dbReference type="GO" id="GO:0005739">
    <property type="term" value="C:mitochondrion"/>
    <property type="evidence" value="ECO:0007669"/>
    <property type="project" value="GOC"/>
</dbReference>
<dbReference type="GO" id="GO:0009536">
    <property type="term" value="C:plastid"/>
    <property type="evidence" value="ECO:0007005"/>
    <property type="project" value="TAIR"/>
</dbReference>
<dbReference type="GO" id="GO:0007005">
    <property type="term" value="P:mitochondrion organization"/>
    <property type="evidence" value="ECO:0000316"/>
    <property type="project" value="TAIR"/>
</dbReference>
<dbReference type="GO" id="GO:0045039">
    <property type="term" value="P:protein insertion into mitochondrial inner membrane"/>
    <property type="evidence" value="ECO:0007669"/>
    <property type="project" value="InterPro"/>
</dbReference>
<dbReference type="GO" id="GO:0045036">
    <property type="term" value="P:protein targeting to chloroplast"/>
    <property type="evidence" value="ECO:0000315"/>
    <property type="project" value="UniProtKB"/>
</dbReference>
<dbReference type="GO" id="GO:0016031">
    <property type="term" value="P:tRNA import into mitochondrion"/>
    <property type="evidence" value="ECO:0000316"/>
    <property type="project" value="TAIR"/>
</dbReference>
<dbReference type="FunFam" id="1.10.150.50:FF:000069">
    <property type="entry name" value="mitochondrial import inner membrane translocase subunit TIM22-like"/>
    <property type="match status" value="1"/>
</dbReference>
<dbReference type="Gene3D" id="1.10.150.50">
    <property type="entry name" value="Transcription Factor, Ets-1"/>
    <property type="match status" value="1"/>
</dbReference>
<dbReference type="InterPro" id="IPR001660">
    <property type="entry name" value="SAM"/>
</dbReference>
<dbReference type="InterPro" id="IPR013761">
    <property type="entry name" value="SAM/pointed_sf"/>
</dbReference>
<dbReference type="InterPro" id="IPR039175">
    <property type="entry name" value="TIM22"/>
</dbReference>
<dbReference type="PANTHER" id="PTHR14110:SF32">
    <property type="entry name" value="CHLOROPLASTIC IMPORT INNER MEMBRANE TRANSLOCASE SUBUNIT HP30-1"/>
    <property type="match status" value="1"/>
</dbReference>
<dbReference type="PANTHER" id="PTHR14110">
    <property type="entry name" value="MITOCHONDRIAL IMPORT INNER MEMBRANE TRANSLOCASE SUBUNIT TIM22"/>
    <property type="match status" value="1"/>
</dbReference>
<dbReference type="Pfam" id="PF00536">
    <property type="entry name" value="SAM_1"/>
    <property type="match status" value="1"/>
</dbReference>
<dbReference type="Pfam" id="PF02466">
    <property type="entry name" value="Tim17"/>
    <property type="match status" value="1"/>
</dbReference>
<dbReference type="SUPFAM" id="SSF47769">
    <property type="entry name" value="SAM/Pointed domain"/>
    <property type="match status" value="1"/>
</dbReference>
<comment type="function">
    <text evidence="3">Together with HP30-2 and HP20, triggers the import and insertion of transit sequence-less multi-pass transmembrane proteins (e.g. CEQORH) into the chloroplastic inner membrane.</text>
</comment>
<comment type="subunit">
    <text evidence="3">Probable component of a protein-conducting channel made of HP30-1, HP30-2 and HP20 that mediates the import of transit sequence-less proteins into the chloroplastic inner membrane. Interacts with CEQORH.</text>
</comment>
<comment type="subcellular location">
    <subcellularLocation>
        <location evidence="2 3">Plastid</location>
        <location evidence="2 3">Chloroplast inner membrane</location>
        <topology evidence="1">Multi-pass membrane protein</topology>
    </subcellularLocation>
</comment>
<comment type="disruption phenotype">
    <text evidence="3">Plants lacking both HP30-1 and HP30-2 are yellow to pale-green and impaired import of CEQORH in chloroplast inner membranes.</text>
</comment>
<comment type="similarity">
    <text evidence="5">Belongs to the Tim17/Tim22/Tim23 family.</text>
</comment>
<keyword id="KW-0002">3D-structure</keyword>
<keyword id="KW-0150">Chloroplast</keyword>
<keyword id="KW-0472">Membrane</keyword>
<keyword id="KW-0934">Plastid</keyword>
<keyword id="KW-1001">Plastid inner membrane</keyword>
<keyword id="KW-0653">Protein transport</keyword>
<keyword id="KW-1185">Reference proteome</keyword>
<keyword id="KW-0812">Transmembrane</keyword>
<keyword id="KW-1133">Transmembrane helix</keyword>
<keyword id="KW-0813">Transport</keyword>
<gene>
    <name evidence="4" type="primary">HP30-1</name>
    <name evidence="6" type="ordered locus">At3g49560</name>
    <name evidence="7" type="ORF">T9C5.150</name>
</gene>
<evidence type="ECO:0000255" key="1"/>
<evidence type="ECO:0000269" key="2">
    <source>
    </source>
</evidence>
<evidence type="ECO:0000269" key="3">
    <source>
    </source>
</evidence>
<evidence type="ECO:0000303" key="4">
    <source>
    </source>
</evidence>
<evidence type="ECO:0000305" key="5"/>
<evidence type="ECO:0000312" key="6">
    <source>
        <dbReference type="Araport" id="AT3G49560"/>
    </source>
</evidence>
<evidence type="ECO:0000312" key="7">
    <source>
        <dbReference type="EMBL" id="CAB62460.1"/>
    </source>
</evidence>
<evidence type="ECO:0007829" key="8">
    <source>
        <dbReference type="PDB" id="8UCY"/>
    </source>
</evidence>
<organism>
    <name type="scientific">Arabidopsis thaliana</name>
    <name type="common">Mouse-ear cress</name>
    <dbReference type="NCBI Taxonomy" id="3702"/>
    <lineage>
        <taxon>Eukaryota</taxon>
        <taxon>Viridiplantae</taxon>
        <taxon>Streptophyta</taxon>
        <taxon>Embryophyta</taxon>
        <taxon>Tracheophyta</taxon>
        <taxon>Spermatophyta</taxon>
        <taxon>Magnoliopsida</taxon>
        <taxon>eudicotyledons</taxon>
        <taxon>Gunneridae</taxon>
        <taxon>Pentapetalae</taxon>
        <taxon>rosids</taxon>
        <taxon>malvids</taxon>
        <taxon>Brassicales</taxon>
        <taxon>Brassicaceae</taxon>
        <taxon>Camelineae</taxon>
        <taxon>Arabidopsis</taxon>
    </lineage>
</organism>
<protein>
    <recommendedName>
        <fullName evidence="5">Chloroplastic import inner membrane translocase subunit HP30-1</fullName>
    </recommendedName>
    <alternativeName>
        <fullName evidence="4">Hypothetical inner plastid envelope protein of 30 kDa 1</fullName>
        <shortName evidence="4">AtHP30-1</shortName>
        <shortName evidence="4">Hypothetical protein 30</shortName>
    </alternativeName>
</protein>